<protein>
    <recommendedName>
        <fullName>Rho GTPase-activating protein 32</fullName>
    </recommendedName>
    <alternativeName>
        <fullName>Rho-type GTPase-activating protein 32</fullName>
    </alternativeName>
    <alternativeName>
        <fullName>Rho/Cdc42/Rac GTPase-activating protein RICS</fullName>
    </alternativeName>
</protein>
<gene>
    <name type="primary">arhgap32</name>
    <name type="synonym">rics</name>
</gene>
<reference key="1">
    <citation type="submission" date="2004-06" db="EMBL/GenBank/DDBJ databases">
        <authorList>
            <consortium name="NIH - Xenopus Gene Collection (XGC) project"/>
        </authorList>
    </citation>
    <scope>NUCLEOTIDE SEQUENCE [LARGE SCALE MRNA]</scope>
    <source>
        <tissue>Embryo</tissue>
    </source>
</reference>
<proteinExistence type="evidence at transcript level"/>
<feature type="chain" id="PRO_0000345205" description="Rho GTPase-activating protein 32">
    <location>
        <begin position="1"/>
        <end position="1940"/>
    </location>
</feature>
<feature type="domain" description="PX; atypical">
    <location>
        <begin position="154"/>
        <end position="248"/>
    </location>
</feature>
<feature type="domain" description="SH3" evidence="3">
    <location>
        <begin position="262"/>
        <end position="324"/>
    </location>
</feature>
<feature type="domain" description="Rho-GAP" evidence="2">
    <location>
        <begin position="375"/>
        <end position="570"/>
    </location>
</feature>
<feature type="region of interest" description="Disordered" evidence="4">
    <location>
        <begin position="646"/>
        <end position="746"/>
    </location>
</feature>
<feature type="region of interest" description="Disordered" evidence="4">
    <location>
        <begin position="1035"/>
        <end position="1163"/>
    </location>
</feature>
<feature type="region of interest" description="Disordered" evidence="4">
    <location>
        <begin position="1219"/>
        <end position="1264"/>
    </location>
</feature>
<feature type="region of interest" description="Disordered" evidence="4">
    <location>
        <begin position="1430"/>
        <end position="1454"/>
    </location>
</feature>
<feature type="region of interest" description="Disordered" evidence="4">
    <location>
        <begin position="1675"/>
        <end position="1786"/>
    </location>
</feature>
<feature type="compositionally biased region" description="Polar residues" evidence="4">
    <location>
        <begin position="1047"/>
        <end position="1061"/>
    </location>
</feature>
<feature type="compositionally biased region" description="Low complexity" evidence="4">
    <location>
        <begin position="1081"/>
        <end position="1094"/>
    </location>
</feature>
<feature type="compositionally biased region" description="Low complexity" evidence="4">
    <location>
        <begin position="1145"/>
        <end position="1163"/>
    </location>
</feature>
<feature type="compositionally biased region" description="Basic and acidic residues" evidence="4">
    <location>
        <begin position="1691"/>
        <end position="1707"/>
    </location>
</feature>
<feature type="compositionally biased region" description="Polar residues" evidence="4">
    <location>
        <begin position="1725"/>
        <end position="1734"/>
    </location>
</feature>
<feature type="compositionally biased region" description="Basic and acidic residues" evidence="4">
    <location>
        <begin position="1736"/>
        <end position="1755"/>
    </location>
</feature>
<feature type="site" description="Arginine finger; crucial for GTP hydrolysis by stabilizing the transition state" evidence="2">
    <location>
        <position position="410"/>
    </location>
</feature>
<accession>Q6GPD0</accession>
<keyword id="KW-1003">Cell membrane</keyword>
<keyword id="KW-0963">Cytoplasm</keyword>
<keyword id="KW-0343">GTPase activation</keyword>
<keyword id="KW-0472">Membrane</keyword>
<keyword id="KW-1185">Reference proteome</keyword>
<keyword id="KW-0728">SH3 domain</keyword>
<dbReference type="EMBL" id="BC073211">
    <property type="protein sequence ID" value="AAH73211.1"/>
    <property type="molecule type" value="mRNA"/>
</dbReference>
<dbReference type="RefSeq" id="NP_001085694.1">
    <property type="nucleotide sequence ID" value="NM_001092225.1"/>
</dbReference>
<dbReference type="SMR" id="Q6GPD0"/>
<dbReference type="GeneID" id="444120"/>
<dbReference type="KEGG" id="xla:444120"/>
<dbReference type="AGR" id="Xenbase:XB-GENE-1002479"/>
<dbReference type="CTD" id="444120"/>
<dbReference type="Xenbase" id="XB-GENE-1002479">
    <property type="gene designation" value="arhgap32.L"/>
</dbReference>
<dbReference type="OrthoDB" id="79452at2759"/>
<dbReference type="Proteomes" id="UP000186698">
    <property type="component" value="Chromosome 7L"/>
</dbReference>
<dbReference type="Bgee" id="444120">
    <property type="expression patterns" value="Expressed in egg cell and 19 other cell types or tissues"/>
</dbReference>
<dbReference type="GO" id="GO:0015629">
    <property type="term" value="C:actin cytoskeleton"/>
    <property type="evidence" value="ECO:0000318"/>
    <property type="project" value="GO_Central"/>
</dbReference>
<dbReference type="GO" id="GO:0005938">
    <property type="term" value="C:cell cortex"/>
    <property type="evidence" value="ECO:0000318"/>
    <property type="project" value="GO_Central"/>
</dbReference>
<dbReference type="GO" id="GO:0001650">
    <property type="term" value="C:fibrillar center"/>
    <property type="evidence" value="ECO:0000318"/>
    <property type="project" value="GO_Central"/>
</dbReference>
<dbReference type="GO" id="GO:0005794">
    <property type="term" value="C:Golgi apparatus"/>
    <property type="evidence" value="ECO:0000318"/>
    <property type="project" value="GO_Central"/>
</dbReference>
<dbReference type="GO" id="GO:0005654">
    <property type="term" value="C:nucleoplasm"/>
    <property type="evidence" value="ECO:0000318"/>
    <property type="project" value="GO_Central"/>
</dbReference>
<dbReference type="GO" id="GO:0005886">
    <property type="term" value="C:plasma membrane"/>
    <property type="evidence" value="ECO:0007669"/>
    <property type="project" value="UniProtKB-SubCell"/>
</dbReference>
<dbReference type="GO" id="GO:0014069">
    <property type="term" value="C:postsynaptic density"/>
    <property type="evidence" value="ECO:0000250"/>
    <property type="project" value="UniProtKB"/>
</dbReference>
<dbReference type="GO" id="GO:0005096">
    <property type="term" value="F:GTPase activator activity"/>
    <property type="evidence" value="ECO:0000318"/>
    <property type="project" value="GO_Central"/>
</dbReference>
<dbReference type="GO" id="GO:1901981">
    <property type="term" value="F:phosphatidylinositol phosphate binding"/>
    <property type="evidence" value="ECO:0007669"/>
    <property type="project" value="InterPro"/>
</dbReference>
<dbReference type="GO" id="GO:0007264">
    <property type="term" value="P:small GTPase-mediated signal transduction"/>
    <property type="evidence" value="ECO:0000318"/>
    <property type="project" value="GO_Central"/>
</dbReference>
<dbReference type="CDD" id="cd07298">
    <property type="entry name" value="PX_RICS"/>
    <property type="match status" value="1"/>
</dbReference>
<dbReference type="CDD" id="cd04384">
    <property type="entry name" value="RhoGAP_CdGAP"/>
    <property type="match status" value="1"/>
</dbReference>
<dbReference type="CDD" id="cd11835">
    <property type="entry name" value="SH3_ARHGAP32_33"/>
    <property type="match status" value="1"/>
</dbReference>
<dbReference type="FunFam" id="1.10.555.10:FF:000002">
    <property type="entry name" value="rho GTPase-activating protein 32 isoform X1"/>
    <property type="match status" value="1"/>
</dbReference>
<dbReference type="FunFam" id="2.30.30.40:FF:000030">
    <property type="entry name" value="rho GTPase-activating protein 32 isoform X2"/>
    <property type="match status" value="1"/>
</dbReference>
<dbReference type="FunFam" id="3.30.1520.10:FF:000009">
    <property type="entry name" value="rho GTPase-activating protein 32 isoform X2"/>
    <property type="match status" value="1"/>
</dbReference>
<dbReference type="Gene3D" id="3.30.1520.10">
    <property type="entry name" value="Phox-like domain"/>
    <property type="match status" value="1"/>
</dbReference>
<dbReference type="Gene3D" id="1.10.555.10">
    <property type="entry name" value="Rho GTPase activation protein"/>
    <property type="match status" value="1"/>
</dbReference>
<dbReference type="Gene3D" id="2.30.30.40">
    <property type="entry name" value="SH3 Domains"/>
    <property type="match status" value="1"/>
</dbReference>
<dbReference type="InterPro" id="IPR051576">
    <property type="entry name" value="PX-Rho_GAP"/>
</dbReference>
<dbReference type="InterPro" id="IPR042139">
    <property type="entry name" value="PX_ARHGAP32"/>
</dbReference>
<dbReference type="InterPro" id="IPR036871">
    <property type="entry name" value="PX_dom_sf"/>
</dbReference>
<dbReference type="InterPro" id="IPR008936">
    <property type="entry name" value="Rho_GTPase_activation_prot"/>
</dbReference>
<dbReference type="InterPro" id="IPR000198">
    <property type="entry name" value="RhoGAP_dom"/>
</dbReference>
<dbReference type="InterPro" id="IPR036028">
    <property type="entry name" value="SH3-like_dom_sf"/>
</dbReference>
<dbReference type="InterPro" id="IPR001452">
    <property type="entry name" value="SH3_domain"/>
</dbReference>
<dbReference type="PANTHER" id="PTHR15729">
    <property type="entry name" value="CDC42 GTPASE-ACTIVATING PROTEIN"/>
    <property type="match status" value="1"/>
</dbReference>
<dbReference type="PANTHER" id="PTHR15729:SF13">
    <property type="entry name" value="RHO GTPASE-ACTIVATING PROTEIN 32"/>
    <property type="match status" value="1"/>
</dbReference>
<dbReference type="Pfam" id="PF00620">
    <property type="entry name" value="RhoGAP"/>
    <property type="match status" value="1"/>
</dbReference>
<dbReference type="Pfam" id="PF07653">
    <property type="entry name" value="SH3_2"/>
    <property type="match status" value="1"/>
</dbReference>
<dbReference type="SMART" id="SM00324">
    <property type="entry name" value="RhoGAP"/>
    <property type="match status" value="1"/>
</dbReference>
<dbReference type="SMART" id="SM00326">
    <property type="entry name" value="SH3"/>
    <property type="match status" value="1"/>
</dbReference>
<dbReference type="SUPFAM" id="SSF48350">
    <property type="entry name" value="GTPase activation domain, GAP"/>
    <property type="match status" value="1"/>
</dbReference>
<dbReference type="SUPFAM" id="SSF64268">
    <property type="entry name" value="PX domain"/>
    <property type="match status" value="1"/>
</dbReference>
<dbReference type="SUPFAM" id="SSF50044">
    <property type="entry name" value="SH3-domain"/>
    <property type="match status" value="1"/>
</dbReference>
<dbReference type="PROSITE" id="PS50238">
    <property type="entry name" value="RHOGAP"/>
    <property type="match status" value="1"/>
</dbReference>
<dbReference type="PROSITE" id="PS50002">
    <property type="entry name" value="SH3"/>
    <property type="match status" value="1"/>
</dbReference>
<comment type="function">
    <text evidence="1">GTPase-activating protein (GAP) promoting GTP hydrolysis on RHOA, CDC42 and RAC1 small GTPases.</text>
</comment>
<comment type="subcellular location">
    <subcellularLocation>
        <location evidence="1">Cytoplasm</location>
    </subcellularLocation>
    <subcellularLocation>
        <location evidence="1">Membrane</location>
    </subcellularLocation>
    <subcellularLocation>
        <location evidence="1">Cell membrane</location>
    </subcellularLocation>
</comment>
<comment type="domain">
    <text evidence="1">The N-terminal PX domain interacts specifically with phosphatidylinositides.</text>
</comment>
<comment type="similarity">
    <text evidence="5">Belongs to the PX domain-containing GAP family.</text>
</comment>
<name>RHG32_XENLA</name>
<evidence type="ECO:0000250" key="1"/>
<evidence type="ECO:0000255" key="2">
    <source>
        <dbReference type="PROSITE-ProRule" id="PRU00172"/>
    </source>
</evidence>
<evidence type="ECO:0000255" key="3">
    <source>
        <dbReference type="PROSITE-ProRule" id="PRU00192"/>
    </source>
</evidence>
<evidence type="ECO:0000256" key="4">
    <source>
        <dbReference type="SAM" id="MobiDB-lite"/>
    </source>
</evidence>
<evidence type="ECO:0000305" key="5"/>
<organism>
    <name type="scientific">Xenopus laevis</name>
    <name type="common">African clawed frog</name>
    <dbReference type="NCBI Taxonomy" id="8355"/>
    <lineage>
        <taxon>Eukaryota</taxon>
        <taxon>Metazoa</taxon>
        <taxon>Chordata</taxon>
        <taxon>Craniata</taxon>
        <taxon>Vertebrata</taxon>
        <taxon>Euteleostomi</taxon>
        <taxon>Amphibia</taxon>
        <taxon>Batrachia</taxon>
        <taxon>Anura</taxon>
        <taxon>Pipoidea</taxon>
        <taxon>Pipidae</taxon>
        <taxon>Xenopodinae</taxon>
        <taxon>Xenopus</taxon>
        <taxon>Xenopus</taxon>
    </lineage>
</organism>
<sequence>MEGGTDAAAFAAFPSIHAVPSTSGRMVTGSKLDELERIMKSSLHLEEDDFVPELPRSIHPRERPDWEETISAMARGADITVPGEIQIPAELPLRSCGSTASMKVKNVKKLSFTKGHFPKLAECAHFHYENVDFGSIQLTLTEDQNEVNRNGCESKELVFLVQIACQGRSWIVKRSYEDFRVLDKHLHLCIYDRRFSQLSELPRSDSVKDNPELVTQMLMAYLSRLSAIAGNKINCGPALTWMEIDNKGNHLLVHEESSINVPAIAAAHVIKRYNAQAPDELSFEVGDIVSVIDMPPKELTTWWRGKHGFQVGFFPSECVELINDKVPQSMTNSVPKPVSRKHGKLITFLRTFMKSRPSKQKLKQRGILRERVFGCDLGEHLLNSGQDVPQVLRSCTEFIEKHGVVDGIYRLSGIASNIQKLRHEFDSEQIPDLTKDVYIQDIHCVGSLCKLYFRELPNPLLTYQLYEKFSDAVSAASDEERLVKIHDVIQQLPPPHYRTLEFLMRHLSRLATYCSITNMHTKNLAIVWAPNLLRSKQIESACFSGTAAFMEVRIQSVVVEFILNHVEVLFSAKLSSVIREGAGHTSLSRPKSLLVSSPSTKLLSLEEAQARTQAQINSPVVGDSRYIEVGEGPAALQGRFHTVIDFPSERKRPPSKMKKSPVGSWRSFFNIGKSSSSSSMSKRKLQRNPSEPLEMKSMAFAGGRDSSAMRSAKSEESLSSLHAADGESKLFRPRRPRSSSDALSASYNGDLLDSCNRCNSYDNLPRDHDSDGDEGLIHVPAMLSGRSPEDEDLSPPDIGMATLDFDPMSFQCSPHQLDSEGPDNFFQLDIFASNGKDKLQSGTQNPGSVTGCEPLSPFQDKVISPFLSPDRSPSTDKVSKTASFAEKFVQALSPKMGRKAVRSPPLTISDPVSISLPSRVSEMIGSMPGNSAASQSIIWNRESSTNSRESETYYGCKLVDANLSSSSATADPWSTVTPVITCNQDGREDKAGIFTHGFPQPLESSDLEYIENYNLELGTTNVAAAYQNDDTELSRANQNKAHPPNSPQGASASESPQELSHVSSVSIIPPPPPPKNPARMLALALAESAQQASANKKPSFMQFMDLPPPPSVPEDKPLLEFSPKMSPEPLRSGPATPAASPPVISRKTSPATPPSTTSSFSVTTIHHSPVKNYNPLAGQMPTAVTPGLSPSSNQVFASVPDMLHSETIKMNSIIPSEAFTTGIPVTPPTEKTKESSRAPHLHQRSESFPSHPAYSTAKPTPPVRTMDSRLATAMHSNFNDSITANNYHSFLNTMMLPSSLEDALPRHNYSPHLKTGNIDEEGVNYRQTYLSHNKQDDPADLGDLYRQPYISPGKSENAEIGNAYRHPYPSNTESESLKEPLEPFLHHKPAVAPKTYRAETLLPHIPPQVYGSRCDTPSSAFYGTYINQAKHPRSRNKPDYMPSMSPGVRSYTEDTSSYPTIRRVQSLHVPMQTLPPPIRTVPISRTEVPPDDDPAYCPRPLYQYKQCPPFNSQSDYHVTQLQPYFENGRVHYRYSPYSGGPTYFSSDSNFYDMDPYGTLRLRQLPLYPSRDFASYTTRLQPKATYRSQGLPPYPRGTLREHNFISRDVPPALPPEHPRPLHISWDMEDMDRYRLQSLRRENKARQRAKGPVMSQYDNVTPSLVEDVAGLDVIHLRSRSDPGKTPGLLSVAETKDVRYPGRTEGDERTTYPPPVFGNGHQDKPSLPQKQSGSSRSRMQHDISTEQHSQDTLHRQPSEGRNGPPIPPVDYNAKGMPNPPDPTSYHSSANKYNLTQQEPMRLNHKELRLTEDIERSHTRPADNQHRDCYREEQAQFASVVPPPKPERSHSLRAHNPAVLERDPSIFYPYQTLHAKRQSTINTVSQYDNLSDYHSIPHHRTTNQSTPNAFPLPHGRTYSTALGQGAFLAAELALQRPETKIHVE</sequence>